<reference key="1">
    <citation type="journal article" date="1996" name="J. Bacteriol.">
        <title>Cloning, sequencing, and characterization of the Bacillus subtilis biotin biosynthetic operon.</title>
        <authorList>
            <person name="Bower S."/>
            <person name="Perkins J.B."/>
            <person name="Yocum R.R."/>
            <person name="Howitt C.L."/>
            <person name="Rahaim P."/>
            <person name="Pero J."/>
        </authorList>
    </citation>
    <scope>NUCLEOTIDE SEQUENCE [GENOMIC DNA]</scope>
</reference>
<reference key="2">
    <citation type="journal article" date="1997" name="Microbiology">
        <title>Sequencing and functional annotation of the Bacillus subtilis genes in the 200 kb rrnB-dnaB region.</title>
        <authorList>
            <person name="Lapidus A."/>
            <person name="Galleron N."/>
            <person name="Sorokin A."/>
            <person name="Ehrlich S.D."/>
        </authorList>
    </citation>
    <scope>NUCLEOTIDE SEQUENCE [GENOMIC DNA]</scope>
</reference>
<reference key="3">
    <citation type="journal article" date="1997" name="Nature">
        <title>The complete genome sequence of the Gram-positive bacterium Bacillus subtilis.</title>
        <authorList>
            <person name="Kunst F."/>
            <person name="Ogasawara N."/>
            <person name="Moszer I."/>
            <person name="Albertini A.M."/>
            <person name="Alloni G."/>
            <person name="Azevedo V."/>
            <person name="Bertero M.G."/>
            <person name="Bessieres P."/>
            <person name="Bolotin A."/>
            <person name="Borchert S."/>
            <person name="Borriss R."/>
            <person name="Boursier L."/>
            <person name="Brans A."/>
            <person name="Braun M."/>
            <person name="Brignell S.C."/>
            <person name="Bron S."/>
            <person name="Brouillet S."/>
            <person name="Bruschi C.V."/>
            <person name="Caldwell B."/>
            <person name="Capuano V."/>
            <person name="Carter N.M."/>
            <person name="Choi S.-K."/>
            <person name="Codani J.-J."/>
            <person name="Connerton I.F."/>
            <person name="Cummings N.J."/>
            <person name="Daniel R.A."/>
            <person name="Denizot F."/>
            <person name="Devine K.M."/>
            <person name="Duesterhoeft A."/>
            <person name="Ehrlich S.D."/>
            <person name="Emmerson P.T."/>
            <person name="Entian K.-D."/>
            <person name="Errington J."/>
            <person name="Fabret C."/>
            <person name="Ferrari E."/>
            <person name="Foulger D."/>
            <person name="Fritz C."/>
            <person name="Fujita M."/>
            <person name="Fujita Y."/>
            <person name="Fuma S."/>
            <person name="Galizzi A."/>
            <person name="Galleron N."/>
            <person name="Ghim S.-Y."/>
            <person name="Glaser P."/>
            <person name="Goffeau A."/>
            <person name="Golightly E.J."/>
            <person name="Grandi G."/>
            <person name="Guiseppi G."/>
            <person name="Guy B.J."/>
            <person name="Haga K."/>
            <person name="Haiech J."/>
            <person name="Harwood C.R."/>
            <person name="Henaut A."/>
            <person name="Hilbert H."/>
            <person name="Holsappel S."/>
            <person name="Hosono S."/>
            <person name="Hullo M.-F."/>
            <person name="Itaya M."/>
            <person name="Jones L.-M."/>
            <person name="Joris B."/>
            <person name="Karamata D."/>
            <person name="Kasahara Y."/>
            <person name="Klaerr-Blanchard M."/>
            <person name="Klein C."/>
            <person name="Kobayashi Y."/>
            <person name="Koetter P."/>
            <person name="Koningstein G."/>
            <person name="Krogh S."/>
            <person name="Kumano M."/>
            <person name="Kurita K."/>
            <person name="Lapidus A."/>
            <person name="Lardinois S."/>
            <person name="Lauber J."/>
            <person name="Lazarevic V."/>
            <person name="Lee S.-M."/>
            <person name="Levine A."/>
            <person name="Liu H."/>
            <person name="Masuda S."/>
            <person name="Mauel C."/>
            <person name="Medigue C."/>
            <person name="Medina N."/>
            <person name="Mellado R.P."/>
            <person name="Mizuno M."/>
            <person name="Moestl D."/>
            <person name="Nakai S."/>
            <person name="Noback M."/>
            <person name="Noone D."/>
            <person name="O'Reilly M."/>
            <person name="Ogawa K."/>
            <person name="Ogiwara A."/>
            <person name="Oudega B."/>
            <person name="Park S.-H."/>
            <person name="Parro V."/>
            <person name="Pohl T.M."/>
            <person name="Portetelle D."/>
            <person name="Porwollik S."/>
            <person name="Prescott A.M."/>
            <person name="Presecan E."/>
            <person name="Pujic P."/>
            <person name="Purnelle B."/>
            <person name="Rapoport G."/>
            <person name="Rey M."/>
            <person name="Reynolds S."/>
            <person name="Rieger M."/>
            <person name="Rivolta C."/>
            <person name="Rocha E."/>
            <person name="Roche B."/>
            <person name="Rose M."/>
            <person name="Sadaie Y."/>
            <person name="Sato T."/>
            <person name="Scanlan E."/>
            <person name="Schleich S."/>
            <person name="Schroeter R."/>
            <person name="Scoffone F."/>
            <person name="Sekiguchi J."/>
            <person name="Sekowska A."/>
            <person name="Seror S.J."/>
            <person name="Serror P."/>
            <person name="Shin B.-S."/>
            <person name="Soldo B."/>
            <person name="Sorokin A."/>
            <person name="Tacconi E."/>
            <person name="Takagi T."/>
            <person name="Takahashi H."/>
            <person name="Takemaru K."/>
            <person name="Takeuchi M."/>
            <person name="Tamakoshi A."/>
            <person name="Tanaka T."/>
            <person name="Terpstra P."/>
            <person name="Tognoni A."/>
            <person name="Tosato V."/>
            <person name="Uchiyama S."/>
            <person name="Vandenbol M."/>
            <person name="Vannier F."/>
            <person name="Vassarotti A."/>
            <person name="Viari A."/>
            <person name="Wambutt R."/>
            <person name="Wedler E."/>
            <person name="Wedler H."/>
            <person name="Weitzenegger T."/>
            <person name="Winters P."/>
            <person name="Wipat A."/>
            <person name="Yamamoto H."/>
            <person name="Yamane K."/>
            <person name="Yasumoto K."/>
            <person name="Yata K."/>
            <person name="Yoshida K."/>
            <person name="Yoshikawa H.-F."/>
            <person name="Zumstein E."/>
            <person name="Yoshikawa H."/>
            <person name="Danchin A."/>
        </authorList>
    </citation>
    <scope>NUCLEOTIDE SEQUENCE [LARGE SCALE GENOMIC DNA]</scope>
    <source>
        <strain>168</strain>
    </source>
</reference>
<reference key="4">
    <citation type="journal article" date="2009" name="Microbiology">
        <title>From a consortium sequence to a unified sequence: the Bacillus subtilis 168 reference genome a decade later.</title>
        <authorList>
            <person name="Barbe V."/>
            <person name="Cruveiller S."/>
            <person name="Kunst F."/>
            <person name="Lenoble P."/>
            <person name="Meurice G."/>
            <person name="Sekowska A."/>
            <person name="Vallenet D."/>
            <person name="Wang T."/>
            <person name="Moszer I."/>
            <person name="Medigue C."/>
            <person name="Danchin A."/>
        </authorList>
    </citation>
    <scope>SEQUENCE REVISION TO N-TERMINUS</scope>
</reference>
<evidence type="ECO:0000305" key="1"/>
<keyword id="KW-1185">Reference proteome</keyword>
<protein>
    <recommendedName>
        <fullName>Uncharacterized protein YtbQ</fullName>
    </recommendedName>
</protein>
<comment type="similarity">
    <text evidence="1">Belongs to the NAD(P)-dependent epimerase/dehydratase family.</text>
</comment>
<comment type="sequence caution" evidence="1">
    <conflict type="erroneous initiation">
        <sequence resource="EMBL-CDS" id="AAC00267"/>
    </conflict>
</comment>
<gene>
    <name type="primary">ytbQ</name>
    <name type="ordered locus">BSU30180</name>
</gene>
<proteinExistence type="inferred from homology"/>
<dbReference type="EMBL" id="U51868">
    <property type="protein sequence ID" value="AAB17463.1"/>
    <property type="molecule type" value="Genomic_DNA"/>
</dbReference>
<dbReference type="EMBL" id="AF008220">
    <property type="protein sequence ID" value="AAC00267.1"/>
    <property type="status" value="ALT_INIT"/>
    <property type="molecule type" value="Genomic_DNA"/>
</dbReference>
<dbReference type="EMBL" id="AL009126">
    <property type="protein sequence ID" value="CAB14996.2"/>
    <property type="molecule type" value="Genomic_DNA"/>
</dbReference>
<dbReference type="PIR" id="F69988">
    <property type="entry name" value="F69988"/>
</dbReference>
<dbReference type="RefSeq" id="NP_390896.2">
    <property type="nucleotide sequence ID" value="NC_000964.3"/>
</dbReference>
<dbReference type="RefSeq" id="WP_003245974.1">
    <property type="nucleotide sequence ID" value="NZ_OZ025638.1"/>
</dbReference>
<dbReference type="SMR" id="P53560"/>
<dbReference type="FunCoup" id="P53560">
    <property type="interactions" value="10"/>
</dbReference>
<dbReference type="STRING" id="224308.BSU30180"/>
<dbReference type="PaxDb" id="224308-BSU30180"/>
<dbReference type="EnsemblBacteria" id="CAB14996">
    <property type="protein sequence ID" value="CAB14996"/>
    <property type="gene ID" value="BSU_30180"/>
</dbReference>
<dbReference type="GeneID" id="937270"/>
<dbReference type="KEGG" id="bsu:BSU30180"/>
<dbReference type="PATRIC" id="fig|224308.179.peg.3274"/>
<dbReference type="eggNOG" id="COG0451">
    <property type="taxonomic scope" value="Bacteria"/>
</dbReference>
<dbReference type="InParanoid" id="P53560"/>
<dbReference type="OrthoDB" id="9779902at2"/>
<dbReference type="PhylomeDB" id="P53560"/>
<dbReference type="BioCyc" id="BSUB:BSU30180-MONOMER"/>
<dbReference type="Proteomes" id="UP000001570">
    <property type="component" value="Chromosome"/>
</dbReference>
<dbReference type="GO" id="GO:0008460">
    <property type="term" value="F:dTDP-glucose 4,6-dehydratase activity"/>
    <property type="evidence" value="ECO:0000318"/>
    <property type="project" value="GO_Central"/>
</dbReference>
<dbReference type="Gene3D" id="3.40.50.720">
    <property type="entry name" value="NAD(P)-binding Rossmann-like Domain"/>
    <property type="match status" value="1"/>
</dbReference>
<dbReference type="InterPro" id="IPR001509">
    <property type="entry name" value="Epimerase_deHydtase"/>
</dbReference>
<dbReference type="InterPro" id="IPR050177">
    <property type="entry name" value="Lipid_A_modif_metabolic_enz"/>
</dbReference>
<dbReference type="InterPro" id="IPR036291">
    <property type="entry name" value="NAD(P)-bd_dom_sf"/>
</dbReference>
<dbReference type="PANTHER" id="PTHR43245">
    <property type="entry name" value="BIFUNCTIONAL POLYMYXIN RESISTANCE PROTEIN ARNA"/>
    <property type="match status" value="1"/>
</dbReference>
<dbReference type="PANTHER" id="PTHR43245:SF55">
    <property type="entry name" value="NAD(P)-BINDING DOMAIN-CONTAINING PROTEIN"/>
    <property type="match status" value="1"/>
</dbReference>
<dbReference type="Pfam" id="PF01370">
    <property type="entry name" value="Epimerase"/>
    <property type="match status" value="1"/>
</dbReference>
<dbReference type="SUPFAM" id="SSF51735">
    <property type="entry name" value="NAD(P)-binding Rossmann-fold domains"/>
    <property type="match status" value="1"/>
</dbReference>
<name>YTBQ_BACSU</name>
<accession>P53560</accession>
<accession>O34914</accession>
<sequence length="253" mass="28233">MKKVLIAGGNGVIGRLLAEGLISDYEVTVLDKDHFDGKASSIQADAANYEELLKKIPKDTDAILNLLAVKIKYDIMDIAEFEKMTDVFYRASYYLCRAAAELGIQKLVFASSNHVTDVYEKDGRSLLGREITTSDYPLSKNLYGVLKLTSEQIGHLFYLENKLSVINLRIGTVVTDEMDTLHEKERTKKTLLSHPDLLSIFKAAIETNIRYGTYYAVSDNPGRPWSIESAVNELGFSPQINTAELLNEEENGA</sequence>
<feature type="chain" id="PRO_0000049896" description="Uncharacterized protein YtbQ">
    <location>
        <begin position="1"/>
        <end position="253"/>
    </location>
</feature>
<organism>
    <name type="scientific">Bacillus subtilis (strain 168)</name>
    <dbReference type="NCBI Taxonomy" id="224308"/>
    <lineage>
        <taxon>Bacteria</taxon>
        <taxon>Bacillati</taxon>
        <taxon>Bacillota</taxon>
        <taxon>Bacilli</taxon>
        <taxon>Bacillales</taxon>
        <taxon>Bacillaceae</taxon>
        <taxon>Bacillus</taxon>
    </lineage>
</organism>